<keyword id="KW-0165">Cleavage on pair of basic residues</keyword>
<keyword id="KW-1015">Disulfide bond</keyword>
<keyword id="KW-0378">Hydrolase</keyword>
<keyword id="KW-0479">Metal-binding</keyword>
<keyword id="KW-0482">Metalloprotease</keyword>
<keyword id="KW-0645">Protease</keyword>
<keyword id="KW-0964">Secreted</keyword>
<keyword id="KW-0732">Signal</keyword>
<keyword id="KW-0843">Virulence</keyword>
<keyword id="KW-0862">Zinc</keyword>
<keyword id="KW-0865">Zymogen</keyword>
<organism>
    <name type="scientific">Trichophyton verrucosum (strain HKI 0517)</name>
    <dbReference type="NCBI Taxonomy" id="663202"/>
    <lineage>
        <taxon>Eukaryota</taxon>
        <taxon>Fungi</taxon>
        <taxon>Dikarya</taxon>
        <taxon>Ascomycota</taxon>
        <taxon>Pezizomycotina</taxon>
        <taxon>Eurotiomycetes</taxon>
        <taxon>Eurotiomycetidae</taxon>
        <taxon>Onygenales</taxon>
        <taxon>Arthrodermataceae</taxon>
        <taxon>Trichophyton</taxon>
    </lineage>
</organism>
<accession>D4DGR5</accession>
<name>NPIIC_TRIVH</name>
<reference key="1">
    <citation type="journal article" date="2011" name="Genome Biol.">
        <title>Comparative and functional genomics provide insights into the pathogenicity of dermatophytic fungi.</title>
        <authorList>
            <person name="Burmester A."/>
            <person name="Shelest E."/>
            <person name="Gloeckner G."/>
            <person name="Heddergott C."/>
            <person name="Schindler S."/>
            <person name="Staib P."/>
            <person name="Heidel A."/>
            <person name="Felder M."/>
            <person name="Petzold A."/>
            <person name="Szafranski K."/>
            <person name="Feuermann M."/>
            <person name="Pedruzzi I."/>
            <person name="Priebe S."/>
            <person name="Groth M."/>
            <person name="Winkler R."/>
            <person name="Li W."/>
            <person name="Kniemeyer O."/>
            <person name="Schroeckh V."/>
            <person name="Hertweck C."/>
            <person name="Hube B."/>
            <person name="White T.C."/>
            <person name="Platzer M."/>
            <person name="Guthke R."/>
            <person name="Heitman J."/>
            <person name="Woestemeyer J."/>
            <person name="Zipfel P.F."/>
            <person name="Monod M."/>
            <person name="Brakhage A.A."/>
        </authorList>
    </citation>
    <scope>NUCLEOTIDE SEQUENCE [LARGE SCALE GENOMIC DNA]</scope>
    <source>
        <strain>HKI 0517</strain>
    </source>
</reference>
<proteinExistence type="inferred from homology"/>
<evidence type="ECO:0000250" key="1"/>
<evidence type="ECO:0000255" key="2"/>
<evidence type="ECO:0000255" key="3">
    <source>
        <dbReference type="PROSITE-ProRule" id="PRU10095"/>
    </source>
</evidence>
<evidence type="ECO:0000305" key="4"/>
<sequence length="356" mass="38323">MQFTALLAALGAPLALAASIPAAAHNHSMIDVQLAATGNSMIKATITNTGDRTLNLLKFNTIMDEHPTRKVMVYQDGAEVQFTGMLPRYKMSDLTPEYFVNLGPKASVEHSFDLAATHDLSRGGKIVVKAHGMVPTAEENATTITGHTLYESNELTMDVDGKQAAAVEQAMGGDDSTGVIDKRSNIVTSSCRGSQLRVLQTALSNSARLSRAAASAAQRNPSKMREYFKTADSRTVQKVASRFLSVARESSSGSTGRTTYYCNDNRGGCHPGVLAYTLPSKNQVFNCPSYYQLPALNNRCHGQDQATTTLHELTHNPAVVTPFCEDLGYGYQRVSALPASKAIQNADTYSLFANGM</sequence>
<comment type="function">
    <text evidence="1">Probable secreted metalloprotease that shows high activities on basic nuclear substrates such as histone and protamine (By similarity). May be involved in virulence.</text>
</comment>
<comment type="catalytic activity">
    <reaction>
        <text>Preferential cleavage of bonds with hydrophobic residues in P1'. Also 3-Asn-|-Gln-4 and 8-Gly-|-Ser-9 bonds in insulin B chain.</text>
        <dbReference type="EC" id="3.4.24.39"/>
    </reaction>
</comment>
<comment type="cofactor">
    <cofactor evidence="1">
        <name>Zn(2+)</name>
        <dbReference type="ChEBI" id="CHEBI:29105"/>
    </cofactor>
    <text evidence="1">Binds 1 zinc ion per subunit.</text>
</comment>
<comment type="subcellular location">
    <subcellularLocation>
        <location evidence="4">Secreted</location>
    </subcellularLocation>
</comment>
<comment type="similarity">
    <text evidence="4">Belongs to the peptidase M35 family.</text>
</comment>
<feature type="signal peptide" evidence="2">
    <location>
        <begin position="1"/>
        <end position="17"/>
    </location>
</feature>
<feature type="propeptide" id="PRO_0000397748" evidence="1">
    <location>
        <begin position="18"/>
        <end position="183"/>
    </location>
</feature>
<feature type="chain" id="PRO_0000397749" description="Probable neutral protease 2 homolog TRV_06370">
    <location>
        <begin position="184"/>
        <end position="356"/>
    </location>
</feature>
<feature type="active site" evidence="3">
    <location>
        <position position="312"/>
    </location>
</feature>
<feature type="binding site" evidence="3">
    <location>
        <position position="311"/>
    </location>
    <ligand>
        <name>Zn(2+)</name>
        <dbReference type="ChEBI" id="CHEBI:29105"/>
        <note>catalytic</note>
    </ligand>
</feature>
<feature type="binding site" evidence="3">
    <location>
        <position position="315"/>
    </location>
    <ligand>
        <name>Zn(2+)</name>
        <dbReference type="ChEBI" id="CHEBI:29105"/>
        <note>catalytic</note>
    </ligand>
</feature>
<feature type="binding site" evidence="3">
    <location>
        <position position="326"/>
    </location>
    <ligand>
        <name>Zn(2+)</name>
        <dbReference type="ChEBI" id="CHEBI:29105"/>
        <note>catalytic</note>
    </ligand>
</feature>
<feature type="disulfide bond" evidence="1">
    <location>
        <begin position="191"/>
        <end position="262"/>
    </location>
</feature>
<feature type="disulfide bond" evidence="1">
    <location>
        <begin position="269"/>
        <end position="287"/>
    </location>
</feature>
<dbReference type="EC" id="3.4.24.39"/>
<dbReference type="EMBL" id="ACYE01000363">
    <property type="protein sequence ID" value="EFE38929.1"/>
    <property type="molecule type" value="Genomic_DNA"/>
</dbReference>
<dbReference type="RefSeq" id="XP_003019574.1">
    <property type="nucleotide sequence ID" value="XM_003019528.1"/>
</dbReference>
<dbReference type="SMR" id="D4DGR5"/>
<dbReference type="MEROPS" id="M35.001"/>
<dbReference type="GeneID" id="9578348"/>
<dbReference type="KEGG" id="tve:TRV_06370"/>
<dbReference type="HOGENOM" id="CLU_039313_1_0_1"/>
<dbReference type="OrthoDB" id="4233at34384"/>
<dbReference type="Proteomes" id="UP000008383">
    <property type="component" value="Unassembled WGS sequence"/>
</dbReference>
<dbReference type="GO" id="GO:0005576">
    <property type="term" value="C:extracellular region"/>
    <property type="evidence" value="ECO:0007669"/>
    <property type="project" value="UniProtKB-SubCell"/>
</dbReference>
<dbReference type="GO" id="GO:0046872">
    <property type="term" value="F:metal ion binding"/>
    <property type="evidence" value="ECO:0007669"/>
    <property type="project" value="UniProtKB-KW"/>
</dbReference>
<dbReference type="GO" id="GO:0004222">
    <property type="term" value="F:metalloendopeptidase activity"/>
    <property type="evidence" value="ECO:0007669"/>
    <property type="project" value="InterPro"/>
</dbReference>
<dbReference type="GO" id="GO:0006508">
    <property type="term" value="P:proteolysis"/>
    <property type="evidence" value="ECO:0007669"/>
    <property type="project" value="UniProtKB-KW"/>
</dbReference>
<dbReference type="CDD" id="cd11008">
    <property type="entry name" value="M35_deuterolysin_like"/>
    <property type="match status" value="1"/>
</dbReference>
<dbReference type="Gene3D" id="2.60.40.2970">
    <property type="match status" value="1"/>
</dbReference>
<dbReference type="Gene3D" id="3.40.390.10">
    <property type="entry name" value="Collagenase (Catalytic Domain)"/>
    <property type="match status" value="1"/>
</dbReference>
<dbReference type="InterPro" id="IPR050414">
    <property type="entry name" value="Fungal_M35_metalloproteases"/>
</dbReference>
<dbReference type="InterPro" id="IPR024079">
    <property type="entry name" value="MetalloPept_cat_dom_sf"/>
</dbReference>
<dbReference type="InterPro" id="IPR001384">
    <property type="entry name" value="Peptidase_M35"/>
</dbReference>
<dbReference type="PANTHER" id="PTHR37016">
    <property type="match status" value="1"/>
</dbReference>
<dbReference type="PANTHER" id="PTHR37016:SF3">
    <property type="entry name" value="NEUTRAL PROTEASE 2-RELATED"/>
    <property type="match status" value="1"/>
</dbReference>
<dbReference type="Pfam" id="PF02102">
    <property type="entry name" value="Peptidase_M35"/>
    <property type="match status" value="1"/>
</dbReference>
<dbReference type="PRINTS" id="PR00768">
    <property type="entry name" value="DEUTEROLYSIN"/>
</dbReference>
<dbReference type="SUPFAM" id="SSF55486">
    <property type="entry name" value="Metalloproteases ('zincins'), catalytic domain"/>
    <property type="match status" value="1"/>
</dbReference>
<dbReference type="PROSITE" id="PS00142">
    <property type="entry name" value="ZINC_PROTEASE"/>
    <property type="match status" value="1"/>
</dbReference>
<protein>
    <recommendedName>
        <fullName>Probable neutral protease 2 homolog TRV_06370</fullName>
        <ecNumber>3.4.24.39</ecNumber>
    </recommendedName>
    <alternativeName>
        <fullName>Deuterolysin TRV_06370</fullName>
    </alternativeName>
</protein>
<gene>
    <name type="ORF">TRV_06370</name>
</gene>